<proteinExistence type="inferred from homology"/>
<sequence>MGEEGFLAHFAFSIGGLPITQSVLTTWFIMISLFIMAWSTTYKCSLLQPSTYQLIWEGVLSTMYDAIKEVLPEHVELIFPFVATLWIFILVSNLIGVIPGFYSPTADLSVTASLAIMTFLSVHWFGIRAEGWREYLKHYIKPTPFLLPFHLISEISRTLALAVRLFGNIMSLQLTALIVLMIAGFLVPIPILILHIIEAIIQAYIFGMLALIYIAGGIQAHELKSQGESL</sequence>
<reference key="1">
    <citation type="journal article" date="2004" name="Science">
        <title>The genomic sequence of the accidental pathogen Legionella pneumophila.</title>
        <authorList>
            <person name="Chien M."/>
            <person name="Morozova I."/>
            <person name="Shi S."/>
            <person name="Sheng H."/>
            <person name="Chen J."/>
            <person name="Gomez S.M."/>
            <person name="Asamani G."/>
            <person name="Hill K."/>
            <person name="Nuara J."/>
            <person name="Feder M."/>
            <person name="Rineer J."/>
            <person name="Greenberg J.J."/>
            <person name="Steshenko V."/>
            <person name="Park S.H."/>
            <person name="Zhao B."/>
            <person name="Teplitskaya E."/>
            <person name="Edwards J.R."/>
            <person name="Pampou S."/>
            <person name="Georghiou A."/>
            <person name="Chou I.-C."/>
            <person name="Iannuccilli W."/>
            <person name="Ulz M.E."/>
            <person name="Kim D.H."/>
            <person name="Geringer-Sameth A."/>
            <person name="Goldsberry C."/>
            <person name="Morozov P."/>
            <person name="Fischer S.G."/>
            <person name="Segal G."/>
            <person name="Qu X."/>
            <person name="Rzhetsky A."/>
            <person name="Zhang P."/>
            <person name="Cayanis E."/>
            <person name="De Jong P.J."/>
            <person name="Ju J."/>
            <person name="Kalachikov S."/>
            <person name="Shuman H.A."/>
            <person name="Russo J.J."/>
        </authorList>
    </citation>
    <scope>NUCLEOTIDE SEQUENCE [LARGE SCALE GENOMIC DNA]</scope>
    <source>
        <strain>Philadelphia 1 / ATCC 33152 / DSM 7513</strain>
    </source>
</reference>
<comment type="function">
    <text evidence="1">Key component of the proton channel; it plays a direct role in the translocation of protons across the membrane.</text>
</comment>
<comment type="subunit">
    <text evidence="1">F-type ATPases have 2 components, CF(1) - the catalytic core - and CF(0) - the membrane proton channel. CF(1) has five subunits: alpha(3), beta(3), gamma(1), delta(1), epsilon(1). CF(0) has three main subunits: a(1), b(2) and c(9-12). The alpha and beta chains form an alternating ring which encloses part of the gamma chain. CF(1) is attached to CF(0) by a central stalk formed by the gamma and epsilon chains, while a peripheral stalk is formed by the delta and b chains.</text>
</comment>
<comment type="subcellular location">
    <subcellularLocation>
        <location evidence="1">Cell inner membrane</location>
        <topology evidence="1">Multi-pass membrane protein</topology>
    </subcellularLocation>
</comment>
<comment type="similarity">
    <text evidence="1">Belongs to the ATPase A chain family.</text>
</comment>
<keyword id="KW-0066">ATP synthesis</keyword>
<keyword id="KW-0997">Cell inner membrane</keyword>
<keyword id="KW-1003">Cell membrane</keyword>
<keyword id="KW-0138">CF(0)</keyword>
<keyword id="KW-0375">Hydrogen ion transport</keyword>
<keyword id="KW-0406">Ion transport</keyword>
<keyword id="KW-0472">Membrane</keyword>
<keyword id="KW-1185">Reference proteome</keyword>
<keyword id="KW-0812">Transmembrane</keyword>
<keyword id="KW-1133">Transmembrane helix</keyword>
<keyword id="KW-0813">Transport</keyword>
<feature type="chain" id="PRO_0000362338" description="ATP synthase subunit a">
    <location>
        <begin position="1"/>
        <end position="230"/>
    </location>
</feature>
<feature type="transmembrane region" description="Helical" evidence="1">
    <location>
        <begin position="17"/>
        <end position="37"/>
    </location>
</feature>
<feature type="transmembrane region" description="Helical" evidence="1">
    <location>
        <begin position="78"/>
        <end position="98"/>
    </location>
</feature>
<feature type="transmembrane region" description="Helical" evidence="1">
    <location>
        <begin position="107"/>
        <end position="127"/>
    </location>
</feature>
<feature type="transmembrane region" description="Helical" evidence="1">
    <location>
        <begin position="165"/>
        <end position="187"/>
    </location>
</feature>
<feature type="transmembrane region" description="Helical" evidence="1">
    <location>
        <begin position="198"/>
        <end position="218"/>
    </location>
</feature>
<gene>
    <name evidence="1" type="primary">atpB</name>
    <name type="ordered locus">lpg1051</name>
</gene>
<organism>
    <name type="scientific">Legionella pneumophila subsp. pneumophila (strain Philadelphia 1 / ATCC 33152 / DSM 7513)</name>
    <dbReference type="NCBI Taxonomy" id="272624"/>
    <lineage>
        <taxon>Bacteria</taxon>
        <taxon>Pseudomonadati</taxon>
        <taxon>Pseudomonadota</taxon>
        <taxon>Gammaproteobacteria</taxon>
        <taxon>Legionellales</taxon>
        <taxon>Legionellaceae</taxon>
        <taxon>Legionella</taxon>
    </lineage>
</organism>
<name>ATP6_LEGPH</name>
<dbReference type="EMBL" id="AE017354">
    <property type="protein sequence ID" value="AAU27137.1"/>
    <property type="molecule type" value="Genomic_DNA"/>
</dbReference>
<dbReference type="RefSeq" id="WP_010946786.1">
    <property type="nucleotide sequence ID" value="NC_002942.5"/>
</dbReference>
<dbReference type="RefSeq" id="YP_095084.1">
    <property type="nucleotide sequence ID" value="NC_002942.5"/>
</dbReference>
<dbReference type="SMR" id="Q5ZWN4"/>
<dbReference type="STRING" id="272624.lpg1051"/>
<dbReference type="PaxDb" id="272624-lpg1051"/>
<dbReference type="KEGG" id="lpn:lpg1051"/>
<dbReference type="PATRIC" id="fig|272624.6.peg.1091"/>
<dbReference type="eggNOG" id="COG0356">
    <property type="taxonomic scope" value="Bacteria"/>
</dbReference>
<dbReference type="HOGENOM" id="CLU_041018_2_5_6"/>
<dbReference type="OrthoDB" id="9789241at2"/>
<dbReference type="Proteomes" id="UP000000609">
    <property type="component" value="Chromosome"/>
</dbReference>
<dbReference type="GO" id="GO:0005886">
    <property type="term" value="C:plasma membrane"/>
    <property type="evidence" value="ECO:0007669"/>
    <property type="project" value="UniProtKB-SubCell"/>
</dbReference>
<dbReference type="GO" id="GO:0045259">
    <property type="term" value="C:proton-transporting ATP synthase complex"/>
    <property type="evidence" value="ECO:0007669"/>
    <property type="project" value="UniProtKB-KW"/>
</dbReference>
<dbReference type="GO" id="GO:0046933">
    <property type="term" value="F:proton-transporting ATP synthase activity, rotational mechanism"/>
    <property type="evidence" value="ECO:0007669"/>
    <property type="project" value="UniProtKB-UniRule"/>
</dbReference>
<dbReference type="GO" id="GO:0042777">
    <property type="term" value="P:proton motive force-driven plasma membrane ATP synthesis"/>
    <property type="evidence" value="ECO:0007669"/>
    <property type="project" value="TreeGrafter"/>
</dbReference>
<dbReference type="CDD" id="cd00310">
    <property type="entry name" value="ATP-synt_Fo_a_6"/>
    <property type="match status" value="1"/>
</dbReference>
<dbReference type="Gene3D" id="1.20.120.220">
    <property type="entry name" value="ATP synthase, F0 complex, subunit A"/>
    <property type="match status" value="1"/>
</dbReference>
<dbReference type="HAMAP" id="MF_01393">
    <property type="entry name" value="ATP_synth_a_bact"/>
    <property type="match status" value="1"/>
</dbReference>
<dbReference type="InterPro" id="IPR045082">
    <property type="entry name" value="ATP_syn_F0_a_bact/chloroplast"/>
</dbReference>
<dbReference type="InterPro" id="IPR000568">
    <property type="entry name" value="ATP_synth_F0_asu"/>
</dbReference>
<dbReference type="InterPro" id="IPR023011">
    <property type="entry name" value="ATP_synth_F0_asu_AS"/>
</dbReference>
<dbReference type="InterPro" id="IPR035908">
    <property type="entry name" value="F0_ATP_A_sf"/>
</dbReference>
<dbReference type="NCBIfam" id="TIGR01131">
    <property type="entry name" value="ATP_synt_6_or_A"/>
    <property type="match status" value="1"/>
</dbReference>
<dbReference type="NCBIfam" id="NF009954">
    <property type="entry name" value="PRK13420.1"/>
    <property type="match status" value="1"/>
</dbReference>
<dbReference type="PANTHER" id="PTHR42823">
    <property type="entry name" value="ATP SYNTHASE SUBUNIT A, CHLOROPLASTIC"/>
    <property type="match status" value="1"/>
</dbReference>
<dbReference type="PANTHER" id="PTHR42823:SF3">
    <property type="entry name" value="ATP SYNTHASE SUBUNIT A, CHLOROPLASTIC"/>
    <property type="match status" value="1"/>
</dbReference>
<dbReference type="Pfam" id="PF00119">
    <property type="entry name" value="ATP-synt_A"/>
    <property type="match status" value="1"/>
</dbReference>
<dbReference type="PRINTS" id="PR00123">
    <property type="entry name" value="ATPASEA"/>
</dbReference>
<dbReference type="SUPFAM" id="SSF81336">
    <property type="entry name" value="F1F0 ATP synthase subunit A"/>
    <property type="match status" value="1"/>
</dbReference>
<dbReference type="PROSITE" id="PS00449">
    <property type="entry name" value="ATPASE_A"/>
    <property type="match status" value="1"/>
</dbReference>
<protein>
    <recommendedName>
        <fullName evidence="1">ATP synthase subunit a</fullName>
    </recommendedName>
    <alternativeName>
        <fullName evidence="1">ATP synthase F0 sector subunit a</fullName>
    </alternativeName>
    <alternativeName>
        <fullName evidence="1">F-ATPase subunit 6</fullName>
    </alternativeName>
</protein>
<accession>Q5ZWN4</accession>
<evidence type="ECO:0000255" key="1">
    <source>
        <dbReference type="HAMAP-Rule" id="MF_01393"/>
    </source>
</evidence>